<dbReference type="EMBL" id="X55739">
    <property type="protein sequence ID" value="CAA39270.1"/>
    <property type="molecule type" value="mRNA"/>
</dbReference>
<dbReference type="EMBL" id="AF027807">
    <property type="protein sequence ID" value="AAC82978.1"/>
    <property type="molecule type" value="Genomic_DNA"/>
</dbReference>
<dbReference type="EMBL" id="X17070">
    <property type="protein sequence ID" value="CAA34916.1"/>
    <property type="molecule type" value="mRNA"/>
</dbReference>
<dbReference type="EMBL" id="BC069554">
    <property type="protein sequence ID" value="AAH69554.1"/>
    <property type="molecule type" value="mRNA"/>
</dbReference>
<dbReference type="EMBL" id="BC096194">
    <property type="protein sequence ID" value="AAH96194.1"/>
    <property type="molecule type" value="mRNA"/>
</dbReference>
<dbReference type="EMBL" id="BC096195">
    <property type="protein sequence ID" value="AAH96195.1"/>
    <property type="molecule type" value="mRNA"/>
</dbReference>
<dbReference type="EMBL" id="BC096196">
    <property type="protein sequence ID" value="AAH96196.1"/>
    <property type="molecule type" value="mRNA"/>
</dbReference>
<dbReference type="EMBL" id="BC096197">
    <property type="protein sequence ID" value="AAH96197.1"/>
    <property type="molecule type" value="mRNA"/>
</dbReference>
<dbReference type="EMBL" id="X13766">
    <property type="protein sequence ID" value="CAA32017.1"/>
    <property type="molecule type" value="mRNA"/>
</dbReference>
<dbReference type="CCDS" id="CCDS3532.1"/>
<dbReference type="PIR" id="I53730">
    <property type="entry name" value="KBHU"/>
</dbReference>
<dbReference type="RefSeq" id="NP_001289699.1">
    <property type="nucleotide sequence ID" value="NM_001302770.1"/>
</dbReference>
<dbReference type="RefSeq" id="NP_001882.1">
    <property type="nucleotide sequence ID" value="NM_001891.4"/>
</dbReference>
<dbReference type="RefSeq" id="XP_016863249.1">
    <property type="nucleotide sequence ID" value="XM_017007760.1"/>
</dbReference>
<dbReference type="SMR" id="P05814"/>
<dbReference type="BioGRID" id="107834">
    <property type="interactions" value="45"/>
</dbReference>
<dbReference type="FunCoup" id="P05814">
    <property type="interactions" value="169"/>
</dbReference>
<dbReference type="IntAct" id="P05814">
    <property type="interactions" value="19"/>
</dbReference>
<dbReference type="MINT" id="P05814"/>
<dbReference type="STRING" id="9606.ENSP00000341030"/>
<dbReference type="Allergome" id="1064">
    <property type="allergen name" value="Hom s 8"/>
</dbReference>
<dbReference type="iPTMnet" id="P05814"/>
<dbReference type="PhosphoSitePlus" id="P05814"/>
<dbReference type="BioMuta" id="CSN2"/>
<dbReference type="DMDM" id="115661"/>
<dbReference type="MassIVE" id="P05814"/>
<dbReference type="PaxDb" id="9606-ENSP00000341030"/>
<dbReference type="PeptideAtlas" id="P05814"/>
<dbReference type="ProteomicsDB" id="51861"/>
<dbReference type="Antibodypedia" id="24273">
    <property type="antibodies" value="208 antibodies from 25 providers"/>
</dbReference>
<dbReference type="DNASU" id="1447"/>
<dbReference type="Ensembl" id="ENST00000353151.4">
    <property type="protein sequence ID" value="ENSP00000341030.3"/>
    <property type="gene ID" value="ENSG00000135222.7"/>
</dbReference>
<dbReference type="GeneID" id="1447"/>
<dbReference type="KEGG" id="hsa:1447"/>
<dbReference type="MANE-Select" id="ENST00000353151.4">
    <property type="protein sequence ID" value="ENSP00000341030.3"/>
    <property type="RefSeq nucleotide sequence ID" value="NM_001891.4"/>
    <property type="RefSeq protein sequence ID" value="NP_001882.1"/>
</dbReference>
<dbReference type="AGR" id="HGNC:2447"/>
<dbReference type="CTD" id="1447"/>
<dbReference type="DisGeNET" id="1447"/>
<dbReference type="GeneCards" id="CSN2"/>
<dbReference type="HGNC" id="HGNC:2447">
    <property type="gene designation" value="CSN2"/>
</dbReference>
<dbReference type="HPA" id="ENSG00000135222">
    <property type="expression patterns" value="Tissue enriched (breast)"/>
</dbReference>
<dbReference type="MIM" id="115460">
    <property type="type" value="gene"/>
</dbReference>
<dbReference type="neXtProt" id="NX_P05814"/>
<dbReference type="OpenTargets" id="ENSG00000135222"/>
<dbReference type="PharmGKB" id="PA26950"/>
<dbReference type="VEuPathDB" id="HostDB:ENSG00000135222"/>
<dbReference type="eggNOG" id="ENOG502RU0R">
    <property type="taxonomic scope" value="Eukaryota"/>
</dbReference>
<dbReference type="GeneTree" id="ENSGT00390000001890"/>
<dbReference type="HOGENOM" id="CLU_106775_0_0_1"/>
<dbReference type="InParanoid" id="P05814"/>
<dbReference type="OMA" id="EIMEVPK"/>
<dbReference type="OrthoDB" id="9838331at2759"/>
<dbReference type="PAN-GO" id="P05814">
    <property type="GO annotations" value="1 GO annotation based on evolutionary models"/>
</dbReference>
<dbReference type="PhylomeDB" id="P05814"/>
<dbReference type="TreeFam" id="TF336929"/>
<dbReference type="PathwayCommons" id="P05814"/>
<dbReference type="Reactome" id="R-HSA-1251985">
    <property type="pathway name" value="Nuclear signaling by ERBB4"/>
</dbReference>
<dbReference type="SignaLink" id="P05814"/>
<dbReference type="BioGRID-ORCS" id="1447">
    <property type="hits" value="12 hits in 1126 CRISPR screens"/>
</dbReference>
<dbReference type="GeneWiki" id="CSN2"/>
<dbReference type="GenomeRNAi" id="1447"/>
<dbReference type="Pharos" id="P05814">
    <property type="development level" value="Tbio"/>
</dbReference>
<dbReference type="PRO" id="PR:P05814"/>
<dbReference type="Proteomes" id="UP000005640">
    <property type="component" value="Chromosome 4"/>
</dbReference>
<dbReference type="RNAct" id="P05814">
    <property type="molecule type" value="protein"/>
</dbReference>
<dbReference type="Bgee" id="ENSG00000135222">
    <property type="expression patterns" value="Expressed in male germ line stem cell (sensu Vertebrata) in testis and 37 other cell types or tissues"/>
</dbReference>
<dbReference type="ExpressionAtlas" id="P05814">
    <property type="expression patterns" value="baseline and differential"/>
</dbReference>
<dbReference type="GO" id="GO:0005576">
    <property type="term" value="C:extracellular region"/>
    <property type="evidence" value="ECO:0000304"/>
    <property type="project" value="Reactome"/>
</dbReference>
<dbReference type="GO" id="GO:0005615">
    <property type="term" value="C:extracellular space"/>
    <property type="evidence" value="ECO:0000314"/>
    <property type="project" value="UniProtKB"/>
</dbReference>
<dbReference type="GO" id="GO:0005509">
    <property type="term" value="F:calcium ion binding"/>
    <property type="evidence" value="ECO:0000304"/>
    <property type="project" value="ProtInc"/>
</dbReference>
<dbReference type="GO" id="GO:0004869">
    <property type="term" value="F:cysteine-type endopeptidase inhibitor activity"/>
    <property type="evidence" value="ECO:0000314"/>
    <property type="project" value="CAFA"/>
</dbReference>
<dbReference type="GO" id="GO:0004857">
    <property type="term" value="F:enzyme inhibitor activity"/>
    <property type="evidence" value="ECO:0000304"/>
    <property type="project" value="ProtInc"/>
</dbReference>
<dbReference type="GO" id="GO:0006816">
    <property type="term" value="P:calcium ion transport"/>
    <property type="evidence" value="ECO:0000304"/>
    <property type="project" value="ProtInc"/>
</dbReference>
<dbReference type="GO" id="GO:0007595">
    <property type="term" value="P:lactation"/>
    <property type="evidence" value="ECO:0000314"/>
    <property type="project" value="UniProtKB"/>
</dbReference>
<dbReference type="InterPro" id="IPR001588">
    <property type="entry name" value="Casein"/>
</dbReference>
<dbReference type="InterPro" id="IPR016345">
    <property type="entry name" value="Casein_beta"/>
</dbReference>
<dbReference type="InterPro" id="IPR031305">
    <property type="entry name" value="Casein_CS"/>
</dbReference>
<dbReference type="PANTHER" id="PTHR11500">
    <property type="entry name" value="BETA CASEIN"/>
    <property type="match status" value="1"/>
</dbReference>
<dbReference type="PANTHER" id="PTHR11500:SF0">
    <property type="entry name" value="BETA-CASEIN"/>
    <property type="match status" value="1"/>
</dbReference>
<dbReference type="Pfam" id="PF00363">
    <property type="entry name" value="Casein"/>
    <property type="match status" value="1"/>
</dbReference>
<dbReference type="PIRSF" id="PIRSF002372">
    <property type="entry name" value="Beta-casein"/>
    <property type="match status" value="1"/>
</dbReference>
<dbReference type="PROSITE" id="PS00306">
    <property type="entry name" value="CASEIN_ALPHA_BETA"/>
    <property type="match status" value="1"/>
</dbReference>
<feature type="signal peptide" evidence="2">
    <location>
        <begin position="1"/>
        <end position="15"/>
    </location>
</feature>
<feature type="chain" id="PRO_0000004475" description="Beta-casein" evidence="2">
    <location>
        <begin position="16"/>
        <end position="226"/>
    </location>
</feature>
<feature type="modified residue" description="Phosphothreonine; in form 5-P" evidence="1 2">
    <location>
        <position position="18"/>
    </location>
</feature>
<feature type="modified residue" description="Phosphoserine; in form 4-P and form 5-P" evidence="1 2">
    <location>
        <position position="21"/>
    </location>
</feature>
<feature type="modified residue" description="Phosphoserine; in form 3-P, form 4-P and form 5-P" evidence="1 2">
    <location>
        <position position="23"/>
    </location>
</feature>
<feature type="modified residue" description="Phosphoserine; in form 1-P, form 2-P, form 3-P, form 4-P and form 5-P" evidence="1 2">
    <location>
        <position position="24"/>
    </location>
</feature>
<feature type="modified residue" description="Phosphoserine; in form 1-P, form 2-P, form 3-P, form 4-P and form 5-P" evidence="1 2">
    <location>
        <position position="25"/>
    </location>
</feature>
<feature type="sequence conflict" description="In Ref. 6; AA sequence." evidence="3" ref="6">
    <original>T</original>
    <variation>P</variation>
    <location>
        <position position="30"/>
    </location>
</feature>
<feature type="sequence conflict" description="In Ref. 1; CAA39270." evidence="3" ref="1">
    <location>
        <position position="34"/>
    </location>
</feature>
<feature type="sequence conflict" description="In Ref. 6; AA sequence." evidence="3" ref="6">
    <original>EDE</original>
    <variation>TDQ</variation>
    <location>
        <begin position="48"/>
        <end position="50"/>
    </location>
</feature>
<feature type="sequence conflict" description="In Ref. 6; AA sequence." evidence="3" ref="6">
    <original>S</original>
    <variation>Q</variation>
    <location>
        <position position="120"/>
    </location>
</feature>
<feature type="sequence conflict" description="In Ref. 3; CAA34916." evidence="3" ref="3">
    <original>L</original>
    <variation>V</variation>
    <location>
        <position position="133"/>
    </location>
</feature>
<feature type="sequence conflict" description="In Ref. 3; CAA34916." evidence="3" ref="3">
    <original>H</original>
    <variation>Q</variation>
    <location>
        <position position="140"/>
    </location>
</feature>
<feature type="sequence conflict" description="In Ref. 6; AA sequence." evidence="3" ref="6">
    <original>L</original>
    <variation>S</variation>
    <location>
        <position position="149"/>
    </location>
</feature>
<feature type="sequence conflict" description="In Ref. 6; AA sequence." evidence="3" ref="6">
    <original>Q</original>
    <variation>E</variation>
    <location>
        <position position="173"/>
    </location>
</feature>
<feature type="sequence conflict" description="In Ref. 6; AA sequence." evidence="3" ref="6">
    <original>QVV</original>
    <variation>EVL</variation>
    <location>
        <begin position="182"/>
        <end position="184"/>
    </location>
</feature>
<feature type="sequence conflict" description="In Ref. 6; AA sequence." evidence="3" ref="6">
    <original>Q</original>
    <variation>V</variation>
    <location>
        <position position="188"/>
    </location>
</feature>
<feature type="sequence conflict" description="In Ref. 6; AA sequence." evidence="3" ref="6">
    <original>T</original>
    <variation>P</variation>
    <location>
        <position position="207"/>
    </location>
</feature>
<feature type="sequence conflict" description="In Ref. 6; AA sequence." evidence="3" ref="6">
    <original>TQPLAPVHN</original>
    <variation>PEPSTTZABH</variation>
    <location>
        <begin position="214"/>
        <end position="222"/>
    </location>
</feature>
<comment type="function">
    <text>Important role in determination of the surface properties of the casein micelles.</text>
</comment>
<comment type="interaction">
    <interactant intactId="EBI-1642112">
        <id>P05814</id>
    </interactant>
    <interactant intactId="EBI-701903">
        <id>Q14192</id>
        <label>FHL2</label>
    </interactant>
    <organismsDiffer>false</organismsDiffer>
    <experiments>4</experiments>
</comment>
<comment type="interaction">
    <interactant intactId="EBI-1642112">
        <id>P05814</id>
    </interactant>
    <interactant intactId="EBI-947187">
        <id>Q9UHD9</id>
        <label>UBQLN2</label>
    </interactant>
    <organismsDiffer>false</organismsDiffer>
    <experiments>6</experiments>
</comment>
<comment type="subcellular location">
    <subcellularLocation>
        <location>Secreted</location>
    </subcellularLocation>
</comment>
<comment type="tissue specificity">
    <text>Mammary gland specific. Secreted in milk.</text>
</comment>
<comment type="PTM">
    <text evidence="1 2">Form 1-P is phosphorylated once; half of the molecules are phosphorylated on Ser-24, half on Ser-25.</text>
</comment>
<comment type="similarity">
    <text evidence="3">Belongs to the beta-casein family.</text>
</comment>
<comment type="online information" name="Protein Spotlight">
    <link uri="https://www.proteinspotlight.org/back_issues/016"/>
    <text>Of buttons, digestion and glue - Issue 16 of November 2001</text>
</comment>
<reference key="1">
    <citation type="journal article" date="1990" name="FEBS Lett.">
        <title>Cloning and sequencing of a cDNA encoding human milk beta-casein.</title>
        <authorList>
            <person name="Loennerdal B."/>
            <person name="Bergstroem S."/>
            <person name="Andersson Y."/>
            <person name="Hjalmarsson K."/>
            <person name="Sundqvist A.K."/>
            <person name="Hernell O."/>
        </authorList>
    </citation>
    <scope>NUCLEOTIDE SEQUENCE [MRNA]</scope>
</reference>
<reference key="2">
    <citation type="journal article" date="1994" name="Gene">
        <title>Structure of the human beta-casein encoding gene.</title>
        <authorList>
            <person name="Hansson L."/>
            <person name="Edlund A."/>
            <person name="Johansson T."/>
            <person name="Hernell O."/>
            <person name="Stroemqvist M."/>
            <person name="Lindquist S."/>
            <person name="Loennerdal B."/>
            <person name="Bergstroem S."/>
        </authorList>
    </citation>
    <scope>NUCLEOTIDE SEQUENCE [GENOMIC DNA]</scope>
    <source>
        <tissue>Placenta</tissue>
    </source>
</reference>
<reference key="3">
    <citation type="submission" date="1989-10" db="EMBL/GenBank/DDBJ databases">
        <authorList>
            <person name="Menon R.S."/>
        </authorList>
    </citation>
    <scope>NUCLEOTIDE SEQUENCE [MRNA]</scope>
    <source>
        <tissue>Mammary gland</tissue>
    </source>
</reference>
<reference key="4">
    <citation type="submission" date="1997-12" db="EMBL/GenBank/DDBJ databases">
        <title>A high resolution linkage map of human 9q34.1.</title>
        <authorList>
            <person name="Kwiatkowski D.J."/>
        </authorList>
    </citation>
    <scope>NUCLEOTIDE SEQUENCE [GENOMIC DNA]</scope>
    <source>
        <tissue>Placenta</tissue>
    </source>
</reference>
<reference key="5">
    <citation type="journal article" date="2004" name="Genome Res.">
        <title>The status, quality, and expansion of the NIH full-length cDNA project: the Mammalian Gene Collection (MGC).</title>
        <authorList>
            <consortium name="The MGC Project Team"/>
        </authorList>
    </citation>
    <scope>NUCLEOTIDE SEQUENCE [LARGE SCALE MRNA]</scope>
</reference>
<reference key="6">
    <citation type="journal article" date="1984" name="J. Biol. Chem.">
        <title>Human beta-casein. Amino acid sequence and identification of phosphorylation sites.</title>
        <authorList>
            <person name="Greenberg R."/>
            <person name="Groves M.L."/>
            <person name="Dower H.J."/>
        </authorList>
    </citation>
    <scope>PROTEIN SEQUENCE OF 16-226</scope>
    <scope>PHOSPHORYLATION AT THR-18; SER-21; SER-23; SER-24 AND SER-25</scope>
</reference>
<reference key="7">
    <citation type="journal article" date="2008" name="J. Proteome Res.">
        <title>Analysis of the human casein phosphoproteome by 2-D electrophoresis and MALDI-TOF/TOF MS reveals new phosphoforms.</title>
        <authorList>
            <person name="Poth A.G."/>
            <person name="Deeth H.C."/>
            <person name="Alewood P.F."/>
            <person name="Holland J.W."/>
        </authorList>
    </citation>
    <scope>PROTEIN SEQUENCE OF 18-33</scope>
    <scope>PHOSPHORYLATION AT THR-18; SER-21; SER-23; SER-24 AND SER-25</scope>
    <scope>IDENTIFICATION BY MASS SPECTROMETRY</scope>
</reference>
<reference key="8">
    <citation type="journal article" date="1989" name="Nucleic Acids Res.">
        <title>Human beta-casein: partial cDNA sequence and apparent polymorphism.</title>
        <authorList>
            <person name="Menon R.S."/>
            <person name="Ham R.G."/>
        </authorList>
    </citation>
    <scope>NUCLEOTIDE SEQUENCE [MRNA] OF 161-226</scope>
    <source>
        <tissue>Mammary gland</tissue>
    </source>
</reference>
<reference key="9">
    <citation type="journal article" date="1992" name="Biosci. Biotechnol. Biochem.">
        <title>Plasmin cleavage of human beta-casein.</title>
        <authorList>
            <person name="Azuma N."/>
            <person name="Yamauchi K."/>
        </authorList>
    </citation>
    <scope>PROTEIN SEQUENCE OF 176-215</scope>
</reference>
<gene>
    <name type="primary">CSN2</name>
    <name type="synonym">CASB</name>
</gene>
<sequence length="226" mass="25382">MKVLILACLVALALARETIESLSSSEESITEYKQKVEKVKHEDQQQGEDEHQDKIYPSFQPQPLIYPFVEPIPYGFLPQNILPLAQPAVVLPVPQPEIMEVPKAKDTVYTKGRVMPVLKSPTIPFFDPQIPKLTDLENLHLPLPLLQPLMQQVPQPIPQTLALPPQPLWSVPQPKVLPIPQQVVPYPQRAVPVQALLLNQELLLNPTHQIYPVTQPLAPVHNPISV</sequence>
<protein>
    <recommendedName>
        <fullName>Beta-casein</fullName>
    </recommendedName>
</protein>
<evidence type="ECO:0000269" key="1">
    <source>
    </source>
</evidence>
<evidence type="ECO:0000269" key="2">
    <source>
    </source>
</evidence>
<evidence type="ECO:0000305" key="3"/>
<organism>
    <name type="scientific">Homo sapiens</name>
    <name type="common">Human</name>
    <dbReference type="NCBI Taxonomy" id="9606"/>
    <lineage>
        <taxon>Eukaryota</taxon>
        <taxon>Metazoa</taxon>
        <taxon>Chordata</taxon>
        <taxon>Craniata</taxon>
        <taxon>Vertebrata</taxon>
        <taxon>Euteleostomi</taxon>
        <taxon>Mammalia</taxon>
        <taxon>Eutheria</taxon>
        <taxon>Euarchontoglires</taxon>
        <taxon>Primates</taxon>
        <taxon>Haplorrhini</taxon>
        <taxon>Catarrhini</taxon>
        <taxon>Hominidae</taxon>
        <taxon>Homo</taxon>
    </lineage>
</organism>
<name>CASB_HUMAN</name>
<accession>P05814</accession>
<accession>Q4VAZ9</accession>
<accession>Q9UCM5</accession>
<proteinExistence type="evidence at protein level"/>
<keyword id="KW-0903">Direct protein sequencing</keyword>
<keyword id="KW-0494">Milk protein</keyword>
<keyword id="KW-0597">Phosphoprotein</keyword>
<keyword id="KW-1267">Proteomics identification</keyword>
<keyword id="KW-1185">Reference proteome</keyword>
<keyword id="KW-0964">Secreted</keyword>
<keyword id="KW-0732">Signal</keyword>